<sequence>MQKFVLKFLWLQRSVAVSLDQKIGDNVSPLTEFYFWPQCDAWEEMRNFLESKSWINSSESILLLNQVTEIINDWQEKDDSQRKDIFDLKEKFPFVDFIGFD</sequence>
<feature type="chain" id="PRO_0000216760" description="Small ribosomal subunit protein cS23">
    <location>
        <begin position="1"/>
        <end position="101"/>
    </location>
</feature>
<name>RRP3_EUGVI</name>
<accession>Q9BAB9</accession>
<protein>
    <recommendedName>
        <fullName evidence="2">Small ribosomal subunit protein cS23</fullName>
    </recommendedName>
    <alternativeName>
        <fullName>30S ribosomal protein 3, chloroplastic</fullName>
        <shortName>PSRP-3</shortName>
    </alternativeName>
</protein>
<dbReference type="EMBL" id="AF347934">
    <property type="protein sequence ID" value="AAK27696.1"/>
    <property type="molecule type" value="Genomic_DNA"/>
</dbReference>
<dbReference type="SMR" id="Q9BAB9"/>
<dbReference type="GO" id="GO:0009507">
    <property type="term" value="C:chloroplast"/>
    <property type="evidence" value="ECO:0007669"/>
    <property type="project" value="UniProtKB-SubCell"/>
</dbReference>
<dbReference type="GO" id="GO:1990904">
    <property type="term" value="C:ribonucleoprotein complex"/>
    <property type="evidence" value="ECO:0007669"/>
    <property type="project" value="UniProtKB-KW"/>
</dbReference>
<dbReference type="GO" id="GO:0005840">
    <property type="term" value="C:ribosome"/>
    <property type="evidence" value="ECO:0007669"/>
    <property type="project" value="UniProtKB-KW"/>
</dbReference>
<dbReference type="GO" id="GO:0003735">
    <property type="term" value="F:structural constituent of ribosome"/>
    <property type="evidence" value="ECO:0007669"/>
    <property type="project" value="InterPro"/>
</dbReference>
<dbReference type="GO" id="GO:0006412">
    <property type="term" value="P:translation"/>
    <property type="evidence" value="ECO:0007669"/>
    <property type="project" value="UniProtKB-UniRule"/>
</dbReference>
<dbReference type="Gene3D" id="3.30.390.140">
    <property type="match status" value="1"/>
</dbReference>
<dbReference type="HAMAP" id="MF_00619">
    <property type="entry name" value="Ribosomal_plastid_cS23"/>
    <property type="match status" value="1"/>
</dbReference>
<dbReference type="InterPro" id="IPR038447">
    <property type="entry name" value="PSRP-3/Ycf65_sf"/>
</dbReference>
<dbReference type="InterPro" id="IPR006924">
    <property type="entry name" value="Ribosomal_PSRP3/Ycf65"/>
</dbReference>
<dbReference type="PANTHER" id="PTHR35108">
    <property type="entry name" value="30S RIBOSOMAL PROTEIN 3, CHLOROPLASTIC"/>
    <property type="match status" value="1"/>
</dbReference>
<dbReference type="PANTHER" id="PTHR35108:SF1">
    <property type="entry name" value="OS04G0461100 PROTEIN"/>
    <property type="match status" value="1"/>
</dbReference>
<dbReference type="Pfam" id="PF04839">
    <property type="entry name" value="PSRP-3_Ycf65"/>
    <property type="match status" value="1"/>
</dbReference>
<gene>
    <name type="primary">ycf65</name>
</gene>
<reference key="1">
    <citation type="submission" date="2001-02" db="EMBL/GenBank/DDBJ databases">
        <title>An evolutionary study of ycf65 in Euglena chloroplasts.</title>
        <authorList>
            <person name="Hallick R.B."/>
            <person name="De Armond R.L."/>
        </authorList>
    </citation>
    <scope>NUCLEOTIDE SEQUENCE [GENOMIC DNA]</scope>
</reference>
<geneLocation type="chloroplast"/>
<keyword id="KW-0150">Chloroplast</keyword>
<keyword id="KW-0934">Plastid</keyword>
<keyword id="KW-0687">Ribonucleoprotein</keyword>
<keyword id="KW-0689">Ribosomal protein</keyword>
<proteinExistence type="inferred from homology"/>
<comment type="function">
    <text evidence="1">Probably a ribosomal protein or a ribosome-associated protein.</text>
</comment>
<comment type="subunit">
    <text evidence="1">Part of the 30S ribosomal subunit.</text>
</comment>
<comment type="subcellular location">
    <subcellularLocation>
        <location>Plastid</location>
        <location>Chloroplast</location>
    </subcellularLocation>
</comment>
<comment type="similarity">
    <text evidence="3">Belongs to the chloroplast-specific ribosomal protein cS23 family.</text>
</comment>
<evidence type="ECO:0000250" key="1"/>
<evidence type="ECO:0000255" key="2">
    <source>
        <dbReference type="HAMAP-Rule" id="MF_00619"/>
    </source>
</evidence>
<evidence type="ECO:0000305" key="3"/>
<organism>
    <name type="scientific">Euglena viridis</name>
    <name type="common">Cercaria viridis</name>
    <dbReference type="NCBI Taxonomy" id="3040"/>
    <lineage>
        <taxon>Eukaryota</taxon>
        <taxon>Discoba</taxon>
        <taxon>Euglenozoa</taxon>
        <taxon>Euglenida</taxon>
        <taxon>Spirocuta</taxon>
        <taxon>Euglenophyceae</taxon>
        <taxon>Euglenales</taxon>
        <taxon>Euglenaceae</taxon>
        <taxon>Euglena</taxon>
    </lineage>
</organism>